<name>COAD_RHOJR</name>
<comment type="function">
    <text evidence="1">Reversibly transfers an adenylyl group from ATP to 4'-phosphopantetheine, yielding dephospho-CoA (dPCoA) and pyrophosphate.</text>
</comment>
<comment type="catalytic activity">
    <reaction evidence="1">
        <text>(R)-4'-phosphopantetheine + ATP + H(+) = 3'-dephospho-CoA + diphosphate</text>
        <dbReference type="Rhea" id="RHEA:19801"/>
        <dbReference type="ChEBI" id="CHEBI:15378"/>
        <dbReference type="ChEBI" id="CHEBI:30616"/>
        <dbReference type="ChEBI" id="CHEBI:33019"/>
        <dbReference type="ChEBI" id="CHEBI:57328"/>
        <dbReference type="ChEBI" id="CHEBI:61723"/>
        <dbReference type="EC" id="2.7.7.3"/>
    </reaction>
</comment>
<comment type="cofactor">
    <cofactor evidence="1">
        <name>Mg(2+)</name>
        <dbReference type="ChEBI" id="CHEBI:18420"/>
    </cofactor>
</comment>
<comment type="pathway">
    <text evidence="1">Cofactor biosynthesis; coenzyme A biosynthesis; CoA from (R)-pantothenate: step 4/5.</text>
</comment>
<comment type="subunit">
    <text evidence="1">Homohexamer.</text>
</comment>
<comment type="subcellular location">
    <subcellularLocation>
        <location evidence="1">Cytoplasm</location>
    </subcellularLocation>
</comment>
<comment type="similarity">
    <text evidence="1">Belongs to the bacterial CoaD family.</text>
</comment>
<sequence length="164" mass="17880">MTGAVCPGSFDPVTNGHLDVIGRAAAQFDEVIVTVMVNKSKRGLFTVEERIEMLEDSTSELPNVRVSSWHGLLVDYAKQQGITAIVKGLRGANDFDYELQMAQMNQKLSGVDTLFIPTNPTYSYLSSSLVKEVATFGGDVSDMLPEKVHARLLARIAERAAESS</sequence>
<reference key="1">
    <citation type="journal article" date="2006" name="Proc. Natl. Acad. Sci. U.S.A.">
        <title>The complete genome of Rhodococcus sp. RHA1 provides insights into a catabolic powerhouse.</title>
        <authorList>
            <person name="McLeod M.P."/>
            <person name="Warren R.L."/>
            <person name="Hsiao W.W.L."/>
            <person name="Araki N."/>
            <person name="Myhre M."/>
            <person name="Fernandes C."/>
            <person name="Miyazawa D."/>
            <person name="Wong W."/>
            <person name="Lillquist A.L."/>
            <person name="Wang D."/>
            <person name="Dosanjh M."/>
            <person name="Hara H."/>
            <person name="Petrescu A."/>
            <person name="Morin R.D."/>
            <person name="Yang G."/>
            <person name="Stott J.M."/>
            <person name="Schein J.E."/>
            <person name="Shin H."/>
            <person name="Smailus D."/>
            <person name="Siddiqui A.S."/>
            <person name="Marra M.A."/>
            <person name="Jones S.J.M."/>
            <person name="Holt R."/>
            <person name="Brinkman F.S.L."/>
            <person name="Miyauchi K."/>
            <person name="Fukuda M."/>
            <person name="Davies J.E."/>
            <person name="Mohn W.W."/>
            <person name="Eltis L.D."/>
        </authorList>
    </citation>
    <scope>NUCLEOTIDE SEQUENCE [LARGE SCALE GENOMIC DNA]</scope>
    <source>
        <strain>RHA1</strain>
    </source>
</reference>
<keyword id="KW-0067">ATP-binding</keyword>
<keyword id="KW-0173">Coenzyme A biosynthesis</keyword>
<keyword id="KW-0963">Cytoplasm</keyword>
<keyword id="KW-0460">Magnesium</keyword>
<keyword id="KW-0547">Nucleotide-binding</keyword>
<keyword id="KW-0548">Nucleotidyltransferase</keyword>
<keyword id="KW-0808">Transferase</keyword>
<accession>Q0S2E4</accession>
<protein>
    <recommendedName>
        <fullName evidence="1">Phosphopantetheine adenylyltransferase</fullName>
        <ecNumber evidence="1">2.7.7.3</ecNumber>
    </recommendedName>
    <alternativeName>
        <fullName evidence="1">Dephospho-CoA pyrophosphorylase</fullName>
    </alternativeName>
    <alternativeName>
        <fullName evidence="1">Pantetheine-phosphate adenylyltransferase</fullName>
        <shortName evidence="1">PPAT</shortName>
    </alternativeName>
</protein>
<organism>
    <name type="scientific">Rhodococcus jostii (strain RHA1)</name>
    <dbReference type="NCBI Taxonomy" id="101510"/>
    <lineage>
        <taxon>Bacteria</taxon>
        <taxon>Bacillati</taxon>
        <taxon>Actinomycetota</taxon>
        <taxon>Actinomycetes</taxon>
        <taxon>Mycobacteriales</taxon>
        <taxon>Nocardiaceae</taxon>
        <taxon>Rhodococcus</taxon>
    </lineage>
</organism>
<gene>
    <name evidence="1" type="primary">coaD</name>
    <name type="ordered locus">RHA1_ro06519</name>
</gene>
<dbReference type="EC" id="2.7.7.3" evidence="1"/>
<dbReference type="EMBL" id="CP000431">
    <property type="protein sequence ID" value="ABG98292.1"/>
    <property type="molecule type" value="Genomic_DNA"/>
</dbReference>
<dbReference type="RefSeq" id="WP_005240440.1">
    <property type="nucleotide sequence ID" value="NC_008268.1"/>
</dbReference>
<dbReference type="SMR" id="Q0S2E4"/>
<dbReference type="GeneID" id="69890910"/>
<dbReference type="KEGG" id="rha:RHA1_ro06519"/>
<dbReference type="eggNOG" id="COG0669">
    <property type="taxonomic scope" value="Bacteria"/>
</dbReference>
<dbReference type="HOGENOM" id="CLU_100149_1_0_11"/>
<dbReference type="OrthoDB" id="9806661at2"/>
<dbReference type="UniPathway" id="UPA00241">
    <property type="reaction ID" value="UER00355"/>
</dbReference>
<dbReference type="Proteomes" id="UP000008710">
    <property type="component" value="Chromosome"/>
</dbReference>
<dbReference type="GO" id="GO:0005737">
    <property type="term" value="C:cytoplasm"/>
    <property type="evidence" value="ECO:0007669"/>
    <property type="project" value="UniProtKB-SubCell"/>
</dbReference>
<dbReference type="GO" id="GO:0005524">
    <property type="term" value="F:ATP binding"/>
    <property type="evidence" value="ECO:0007669"/>
    <property type="project" value="UniProtKB-KW"/>
</dbReference>
<dbReference type="GO" id="GO:0004595">
    <property type="term" value="F:pantetheine-phosphate adenylyltransferase activity"/>
    <property type="evidence" value="ECO:0007669"/>
    <property type="project" value="UniProtKB-UniRule"/>
</dbReference>
<dbReference type="GO" id="GO:0015937">
    <property type="term" value="P:coenzyme A biosynthetic process"/>
    <property type="evidence" value="ECO:0007669"/>
    <property type="project" value="UniProtKB-UniRule"/>
</dbReference>
<dbReference type="CDD" id="cd02163">
    <property type="entry name" value="PPAT"/>
    <property type="match status" value="1"/>
</dbReference>
<dbReference type="FunFam" id="3.40.50.620:FF:000012">
    <property type="entry name" value="Phosphopantetheine adenylyltransferase"/>
    <property type="match status" value="1"/>
</dbReference>
<dbReference type="Gene3D" id="3.40.50.620">
    <property type="entry name" value="HUPs"/>
    <property type="match status" value="1"/>
</dbReference>
<dbReference type="HAMAP" id="MF_00151">
    <property type="entry name" value="PPAT_bact"/>
    <property type="match status" value="1"/>
</dbReference>
<dbReference type="InterPro" id="IPR004821">
    <property type="entry name" value="Cyt_trans-like"/>
</dbReference>
<dbReference type="InterPro" id="IPR001980">
    <property type="entry name" value="PPAT"/>
</dbReference>
<dbReference type="InterPro" id="IPR014729">
    <property type="entry name" value="Rossmann-like_a/b/a_fold"/>
</dbReference>
<dbReference type="NCBIfam" id="TIGR01510">
    <property type="entry name" value="coaD_prev_kdtB"/>
    <property type="match status" value="1"/>
</dbReference>
<dbReference type="NCBIfam" id="TIGR00125">
    <property type="entry name" value="cyt_tran_rel"/>
    <property type="match status" value="1"/>
</dbReference>
<dbReference type="PANTHER" id="PTHR21342">
    <property type="entry name" value="PHOSPHOPANTETHEINE ADENYLYLTRANSFERASE"/>
    <property type="match status" value="1"/>
</dbReference>
<dbReference type="PANTHER" id="PTHR21342:SF1">
    <property type="entry name" value="PHOSPHOPANTETHEINE ADENYLYLTRANSFERASE"/>
    <property type="match status" value="1"/>
</dbReference>
<dbReference type="Pfam" id="PF01467">
    <property type="entry name" value="CTP_transf_like"/>
    <property type="match status" value="1"/>
</dbReference>
<dbReference type="PRINTS" id="PR01020">
    <property type="entry name" value="LPSBIOSNTHSS"/>
</dbReference>
<dbReference type="SUPFAM" id="SSF52374">
    <property type="entry name" value="Nucleotidylyl transferase"/>
    <property type="match status" value="1"/>
</dbReference>
<evidence type="ECO:0000255" key="1">
    <source>
        <dbReference type="HAMAP-Rule" id="MF_00151"/>
    </source>
</evidence>
<feature type="chain" id="PRO_1000011223" description="Phosphopantetheine adenylyltransferase">
    <location>
        <begin position="1"/>
        <end position="164"/>
    </location>
</feature>
<feature type="binding site" evidence="1">
    <location>
        <begin position="9"/>
        <end position="10"/>
    </location>
    <ligand>
        <name>ATP</name>
        <dbReference type="ChEBI" id="CHEBI:30616"/>
    </ligand>
</feature>
<feature type="binding site" evidence="1">
    <location>
        <position position="9"/>
    </location>
    <ligand>
        <name>substrate</name>
    </ligand>
</feature>
<feature type="binding site" evidence="1">
    <location>
        <position position="17"/>
    </location>
    <ligand>
        <name>ATP</name>
        <dbReference type="ChEBI" id="CHEBI:30616"/>
    </ligand>
</feature>
<feature type="binding site" evidence="1">
    <location>
        <position position="41"/>
    </location>
    <ligand>
        <name>substrate</name>
    </ligand>
</feature>
<feature type="binding site" evidence="1">
    <location>
        <position position="73"/>
    </location>
    <ligand>
        <name>substrate</name>
    </ligand>
</feature>
<feature type="binding site" evidence="1">
    <location>
        <position position="87"/>
    </location>
    <ligand>
        <name>substrate</name>
    </ligand>
</feature>
<feature type="binding site" evidence="1">
    <location>
        <begin position="88"/>
        <end position="90"/>
    </location>
    <ligand>
        <name>ATP</name>
        <dbReference type="ChEBI" id="CHEBI:30616"/>
    </ligand>
</feature>
<feature type="binding site" evidence="1">
    <location>
        <position position="98"/>
    </location>
    <ligand>
        <name>ATP</name>
        <dbReference type="ChEBI" id="CHEBI:30616"/>
    </ligand>
</feature>
<feature type="binding site" evidence="1">
    <location>
        <begin position="122"/>
        <end position="128"/>
    </location>
    <ligand>
        <name>ATP</name>
        <dbReference type="ChEBI" id="CHEBI:30616"/>
    </ligand>
</feature>
<feature type="site" description="Transition state stabilizer" evidence="1">
    <location>
        <position position="17"/>
    </location>
</feature>
<proteinExistence type="inferred from homology"/>